<gene>
    <name evidence="1" type="primary">nusB</name>
    <name type="ordered locus">YpAngola_A3165</name>
</gene>
<name>NUSB_YERPG</name>
<reference key="1">
    <citation type="journal article" date="2010" name="J. Bacteriol.">
        <title>Genome sequence of the deep-rooted Yersinia pestis strain Angola reveals new insights into the evolution and pangenome of the plague bacterium.</title>
        <authorList>
            <person name="Eppinger M."/>
            <person name="Worsham P.L."/>
            <person name="Nikolich M.P."/>
            <person name="Riley D.R."/>
            <person name="Sebastian Y."/>
            <person name="Mou S."/>
            <person name="Achtman M."/>
            <person name="Lindler L.E."/>
            <person name="Ravel J."/>
        </authorList>
    </citation>
    <scope>NUCLEOTIDE SEQUENCE [LARGE SCALE GENOMIC DNA]</scope>
    <source>
        <strain>Angola</strain>
    </source>
</reference>
<protein>
    <recommendedName>
        <fullName evidence="1">Transcription antitermination protein NusB</fullName>
    </recommendedName>
    <alternativeName>
        <fullName evidence="1">Antitermination factor NusB</fullName>
    </alternativeName>
</protein>
<dbReference type="EMBL" id="CP000901">
    <property type="protein sequence ID" value="ABX88687.1"/>
    <property type="molecule type" value="Genomic_DNA"/>
</dbReference>
<dbReference type="RefSeq" id="WP_002208665.1">
    <property type="nucleotide sequence ID" value="NZ_CP009935.1"/>
</dbReference>
<dbReference type="SMR" id="A9R2J9"/>
<dbReference type="GeneID" id="96664444"/>
<dbReference type="KEGG" id="ypg:YpAngola_A3165"/>
<dbReference type="PATRIC" id="fig|349746.12.peg.4224"/>
<dbReference type="GO" id="GO:0005829">
    <property type="term" value="C:cytosol"/>
    <property type="evidence" value="ECO:0007669"/>
    <property type="project" value="TreeGrafter"/>
</dbReference>
<dbReference type="GO" id="GO:0003723">
    <property type="term" value="F:RNA binding"/>
    <property type="evidence" value="ECO:0007669"/>
    <property type="project" value="UniProtKB-UniRule"/>
</dbReference>
<dbReference type="GO" id="GO:0006353">
    <property type="term" value="P:DNA-templated transcription termination"/>
    <property type="evidence" value="ECO:0007669"/>
    <property type="project" value="UniProtKB-UniRule"/>
</dbReference>
<dbReference type="GO" id="GO:0031564">
    <property type="term" value="P:transcription antitermination"/>
    <property type="evidence" value="ECO:0007669"/>
    <property type="project" value="UniProtKB-KW"/>
</dbReference>
<dbReference type="CDD" id="cd00619">
    <property type="entry name" value="Terminator_NusB"/>
    <property type="match status" value="1"/>
</dbReference>
<dbReference type="FunFam" id="1.10.940.10:FF:000001">
    <property type="entry name" value="Transcription antitermination factor NusB"/>
    <property type="match status" value="1"/>
</dbReference>
<dbReference type="Gene3D" id="1.10.940.10">
    <property type="entry name" value="NusB-like"/>
    <property type="match status" value="1"/>
</dbReference>
<dbReference type="HAMAP" id="MF_00073">
    <property type="entry name" value="NusB"/>
    <property type="match status" value="1"/>
</dbReference>
<dbReference type="InterPro" id="IPR035926">
    <property type="entry name" value="NusB-like_sf"/>
</dbReference>
<dbReference type="InterPro" id="IPR011605">
    <property type="entry name" value="NusB_fam"/>
</dbReference>
<dbReference type="InterPro" id="IPR006027">
    <property type="entry name" value="NusB_RsmB_TIM44"/>
</dbReference>
<dbReference type="NCBIfam" id="TIGR01951">
    <property type="entry name" value="nusB"/>
    <property type="match status" value="1"/>
</dbReference>
<dbReference type="PANTHER" id="PTHR11078:SF3">
    <property type="entry name" value="ANTITERMINATION NUSB DOMAIN-CONTAINING PROTEIN"/>
    <property type="match status" value="1"/>
</dbReference>
<dbReference type="PANTHER" id="PTHR11078">
    <property type="entry name" value="N UTILIZATION SUBSTANCE PROTEIN B-RELATED"/>
    <property type="match status" value="1"/>
</dbReference>
<dbReference type="Pfam" id="PF01029">
    <property type="entry name" value="NusB"/>
    <property type="match status" value="1"/>
</dbReference>
<dbReference type="SUPFAM" id="SSF48013">
    <property type="entry name" value="NusB-like"/>
    <property type="match status" value="1"/>
</dbReference>
<organism>
    <name type="scientific">Yersinia pestis bv. Antiqua (strain Angola)</name>
    <dbReference type="NCBI Taxonomy" id="349746"/>
    <lineage>
        <taxon>Bacteria</taxon>
        <taxon>Pseudomonadati</taxon>
        <taxon>Pseudomonadota</taxon>
        <taxon>Gammaproteobacteria</taxon>
        <taxon>Enterobacterales</taxon>
        <taxon>Yersiniaceae</taxon>
        <taxon>Yersinia</taxon>
    </lineage>
</organism>
<sequence>MKPAARRRARECAVQALYSWQLSKNDIADVELQFLSEQDVKDVDIAYFRELLSGVAVNAASLDALMAPFLSRQLEELGQVERAVLRIALFELSKRDDVPYKVAINEAIELAKTFGAEDSHKFVNGVLDKVAPTVRKRK</sequence>
<accession>A9R2J9</accession>
<proteinExistence type="inferred from homology"/>
<feature type="chain" id="PRO_1000092605" description="Transcription antitermination protein NusB">
    <location>
        <begin position="1"/>
        <end position="138"/>
    </location>
</feature>
<keyword id="KW-0694">RNA-binding</keyword>
<keyword id="KW-0804">Transcription</keyword>
<keyword id="KW-0889">Transcription antitermination</keyword>
<keyword id="KW-0805">Transcription regulation</keyword>
<comment type="function">
    <text evidence="1">Involved in transcription antitermination. Required for transcription of ribosomal RNA (rRNA) genes. Binds specifically to the boxA antiterminator sequence of the ribosomal RNA (rrn) operons.</text>
</comment>
<comment type="similarity">
    <text evidence="1">Belongs to the NusB family.</text>
</comment>
<evidence type="ECO:0000255" key="1">
    <source>
        <dbReference type="HAMAP-Rule" id="MF_00073"/>
    </source>
</evidence>